<gene>
    <name evidence="6" type="primary">EXA1</name>
    <name evidence="7" type="synonym">MUSE11</name>
    <name evidence="8" type="synonym">PSIG1</name>
    <name evidence="9" type="ordered locus">At5g42950</name>
    <name evidence="10" type="ORF">MBD2.15</name>
</gene>
<name>EXA1_ARATH</name>
<sequence length="1714" mass="187619">MANSSAGSAADHRNKHLSVNPPHQIFKDIQGSDNAIPLSPQWLLSKPGENKTGMGTGDPNQYGNHSDVVRTTGNGEETLDNLKKKDVFRPSLLDAESGRRDRWRDEERDTLSSVRNDRWRNGDKDSGDNKKVDRWDNVAPKFGEQRRGPNDRWTDSGNKDAAPEQRRESKWNSRWGPDDKEAEIPRNKWDEPGKDGEIIREKGPSLPTSDGDHYRPWRPSQGRGRGEALHNQSTPNKQVTSFSHSRGRGENTAIFSAGRGRMSPGGSIFTSAPNQSHPPGSASDKGESGPGEPPHLRYSRMKLLDVYRMADTECYEKFPDGFIEVPSLTSEEPTDPLALCAPSSDEVNVLDAIEKGKIVSSGAPQTSKDGPTGRNPVEFSQPRRIRPAGSREDMTFGAEESKDESGETRNYPDDKFRPEASHEGYAPFRRGNEAPVRELKEPSMQGNAHVQSASPWRQSSGGERSNRNSHDWNDPSADSRLKSSDSVWSHPKDSINHLGGNNMMLPQSKGESRWQISEDPSLRRQPSLVFDREQEVRKLLPSSPEELSLYYKDPQGLIQGPFSGSDIIGWFEAGYFGIDLLVRLASAPNDSPFSLLGDVMPHLRAKSGPPPGFTGAKQNEFVDAAGTSAFPGVGKVHSGMGETDMLQNDMRYKHVAGTVAENRFIESLMSGGLTNSAQGVQGYGVNSSGGLSLPVTDGGADMYLLAKKLELERQRSIPSPYSYWPGRESANLMPGSENVSENAQQPTRSPSSDLLSILQGVTDRSSPAVSGPLPAWSQPIQKESDLHHAKTFQTQIPFGVQQQRLPEQNLPLSGLLGQPMENNPGGMLSPDMMLAAGLSQEHQSLNLLQQQQLLLQLNAQTPLSAQHQRLLVEKMLLLKHQHKQEEQQQLLRQQQQLYSQVFADQQRSQQRFGDPSYGQLQASLDALRLQPSKDMSQVNQQVQVPVSHEERGINLADLLPVTHATNQTVASFETPSLHLQNQLFGNVDPRMVLPDQIDDTHKKESKSEYERTVSADYVNSLYSEKPVLSPGYHATHNVEEPVSYPNNESSTATMTAPEIVESKLLEEQSKDMYAGKGEVSIELSGETPATEVKNNDVSVARKTSEKKSRKQRAKQAADLAKSTSRAPLQETKKPQPGSADDSEIKGKTKKSADTLIDNDTHLIKSSTATASNTSQMSSEVDSVRGEESSLQNTRTQPGRAWKPAPGFKPKSLLEIQMEEQRVAQAEALAPKISSTVNSVGSAAPWAGIVTNSDSNILRETHGESAITQTGVVKPESVPTLKAKKSHLHDLLADDVFAKSSDKEREVMEIISNNDAFMQVTTTNAESFDDDNFIDARETKKSRKKSARAKTSGAKIAAHVPAVDTSLQTNSVEKGKSSRILQQQEKEVLPAIPSGPSLGDFVLWKGESVNNPPPAAAWSSGPKKSTKPSSLRDIVKEQEKMTTSSHPPPSPVPTTQKAIPPQAHQGGASWSRSASSPSQAVSQSSSQSKSKGDDDLFWGPVEQSTQDTKQGDFPHLTSQNSWGTKNTPGKVNAGTSLNRQKSVSMGSADRVLSSPVVTQASHKGKKEAVTKLTEANGFRDWCKSECLRLLGSEDTSVLEFCLKLSRSEAETLLIENLGSRDPDHKFIDKFLNYKDLLPSEVVEIAFQSKGSGVGTRNNTGEDYYYNTTAANDGFSKVGGKKKAKKGKKVSLSASVLGFNVVSNRIMMGEIQTIED</sequence>
<accession>Q9FMM3</accession>
<comment type="function">
    <text evidence="4 5">Translational repressor involved in the negative regulation of immune receptor accumulation via the inhibition of nucleotide-binding leucine-rich repeat (NLR) receptor mediated defense (PubMed:28362261). Represses NLR protein accumulation (e.g. SNC1, RPS4, RPM1 and RPS2) (PubMed:28362261). Together with SMG7, helps to restrict effector-triggered immunity (ETI) cell death induction during pathogen infection in a salicylic acid- (SA) and reactive oxygen species- (ROS) independent manner (PubMed:29073135). Required for pathogen-associated molecular pattern (PAMP)-induced suppression of necrotrophic fungal (e.g. F.moniliforme) pathogen-derived mycotoxin-triggered (e.g. fumonisin B1) cell death (PubMed:29073135).</text>
</comment>
<comment type="function">
    <text evidence="3 4 5">(Microbial infection) Required for early steps of plantago asiatica mosaic virus (PlAMV, genus Potexvirus) infection (PubMed:27402258). Facilitates pathogenic growth of avirulent hemi-biotrophic bacteria P.syringae pv. tomato (Pst) DC3000 (e.g. AvrRps4 and AvrRpm1) and of the compatible oomycete H.arabidopsidis Noco2 (PubMed:28362261, PubMed:29073135).</text>
</comment>
<comment type="subunit">
    <text evidence="4 5">Associates with eIF4E initiation factors and the ribosome complex, thus likely contributing to the proper translation of target proteins (PubMed:28362261). Interacts directly with RPL18B and eIF4E1 (PubMed:28362261). Binds to SMG7 (PubMed:29073135).</text>
</comment>
<comment type="subcellular location">
    <subcellularLocation>
        <location evidence="4">Cytoplasm</location>
        <location evidence="4">Cytosol</location>
    </subcellularLocation>
    <subcellularLocation>
        <location evidence="5">Cytoplasm</location>
        <location evidence="5">P-body</location>
    </subcellularLocation>
</comment>
<comment type="tissue specificity">
    <text evidence="3">Expressed in all tissues, mostly in flowers, leaves and stems, and, to a lower extent, in roots (at protein level).</text>
</comment>
<comment type="PTM">
    <text evidence="5">Quickly phosphorylated at Ser-39 after treatment of seedlings with the pathogen-associated molecular pattern (PAMP) flg22.</text>
</comment>
<comment type="disruption phenotype">
    <text evidence="3 4 5">Reduced size with a curly leaf phenotype associated with an abnormal constitutive PR1 expression (PubMed:28362261, PubMed:29073135). No spontaneous lesions, but enhanced cell death independent of salicylic acid (SA) biosynthesis or reactive oxygen species (ROS) production during pathogen infection (e.g. P.syringae and F.moniliforme) (PubMed:29073135). Heightened nucleotide-binding leucine-rich repeat protein (NLR, e.g. SNC1, RPS4, RPM1 and RPS2) accumulation and enhanced resistance against virulent pathogens (PubMed:28362261). Enhanced snc1-mediated autoimmunity including stunted growth, increased expression of pathogenesis related (PR, e.g. PR1 and PR2) genes and enhanced disease resistance against the virulent oomycete pathogen H.arabidopsidis Noco2, and reduced hemi-biotrophic bacterial growth of P.syringae pv. tomato (Pst) DC3000 expressing avirulent effectors AvrRps4 and AvrRpm1 (PubMed:28362261, PubMed:29073135). Abnormal resistance to plantago asiatica mosaic virus (PlAMV, genus Potexvirus) with the absence of infection foci prior to cell-to-cell movement (PubMed:27402258). Increased oxidative bursts, mitogen-activated protein kinase activation and callose deposition in response to the pathogen-associated molecular pattern (PAMP) flg22 (PubMed:29073135).</text>
</comment>
<protein>
    <recommendedName>
        <fullName evidence="6">Protein ESSENTIAL FOR POTEXVIRUS ACCUMULATION 1</fullName>
    </recommendedName>
    <alternativeName>
        <fullName evidence="8">Plant SMY2-type ILE-GYF domain-containing protein 1</fullName>
    </alternativeName>
    <alternativeName>
        <fullName evidence="7">Protein MUTANT, SNC1-ENHANCING 11</fullName>
    </alternativeName>
</protein>
<feature type="chain" id="PRO_0000447893" description="Protein ESSENTIAL FOR POTEXVIRUS ACCUMULATION 1">
    <location>
        <begin position="1"/>
        <end position="1714"/>
    </location>
</feature>
<feature type="domain" description="GYF" evidence="1">
    <location>
        <begin position="546"/>
        <end position="597"/>
    </location>
</feature>
<feature type="region of interest" description="Disordered" evidence="2">
    <location>
        <begin position="1"/>
        <end position="296"/>
    </location>
</feature>
<feature type="region of interest" description="Disordered" evidence="2">
    <location>
        <begin position="358"/>
        <end position="511"/>
    </location>
</feature>
<feature type="region of interest" description="Disordered" evidence="2">
    <location>
        <begin position="728"/>
        <end position="753"/>
    </location>
</feature>
<feature type="region of interest" description="Disordered" evidence="2">
    <location>
        <begin position="1092"/>
        <end position="1205"/>
    </location>
</feature>
<feature type="region of interest" description="Disordered" evidence="2">
    <location>
        <begin position="1437"/>
        <end position="1566"/>
    </location>
</feature>
<feature type="compositionally biased region" description="Polar residues" evidence="2">
    <location>
        <begin position="58"/>
        <end position="75"/>
    </location>
</feature>
<feature type="compositionally biased region" description="Basic and acidic residues" evidence="2">
    <location>
        <begin position="96"/>
        <end position="136"/>
    </location>
</feature>
<feature type="compositionally biased region" description="Basic and acidic residues" evidence="2">
    <location>
        <begin position="143"/>
        <end position="203"/>
    </location>
</feature>
<feature type="compositionally biased region" description="Polar residues" evidence="2">
    <location>
        <begin position="230"/>
        <end position="244"/>
    </location>
</feature>
<feature type="compositionally biased region" description="Polar residues" evidence="2">
    <location>
        <begin position="268"/>
        <end position="278"/>
    </location>
</feature>
<feature type="compositionally biased region" description="Basic and acidic residues" evidence="2">
    <location>
        <begin position="389"/>
        <end position="422"/>
    </location>
</feature>
<feature type="compositionally biased region" description="Basic and acidic residues" evidence="2">
    <location>
        <begin position="430"/>
        <end position="441"/>
    </location>
</feature>
<feature type="compositionally biased region" description="Polar residues" evidence="2">
    <location>
        <begin position="444"/>
        <end position="463"/>
    </location>
</feature>
<feature type="compositionally biased region" description="Basic and acidic residues" evidence="2">
    <location>
        <begin position="464"/>
        <end position="483"/>
    </location>
</feature>
<feature type="compositionally biased region" description="Polar residues" evidence="2">
    <location>
        <begin position="737"/>
        <end position="753"/>
    </location>
</feature>
<feature type="compositionally biased region" description="Basic and acidic residues" evidence="2">
    <location>
        <begin position="1142"/>
        <end position="1162"/>
    </location>
</feature>
<feature type="compositionally biased region" description="Polar residues" evidence="2">
    <location>
        <begin position="1163"/>
        <end position="1180"/>
    </location>
</feature>
<feature type="compositionally biased region" description="Low complexity" evidence="2">
    <location>
        <begin position="1467"/>
        <end position="1488"/>
    </location>
</feature>
<feature type="compositionally biased region" description="Polar residues" evidence="2">
    <location>
        <begin position="1515"/>
        <end position="1544"/>
    </location>
</feature>
<feature type="modified residue" description="Phosphoserine" evidence="5">
    <location>
        <position position="39"/>
    </location>
</feature>
<feature type="mutagenesis site" description="Enhanced cell death phenotype triggered by P.syringae pv. tomato (Pst) DC3000. Abolished interaction with SMG7." evidence="5">
    <original>Y</original>
    <variation>A</variation>
    <location>
        <position position="575"/>
    </location>
</feature>
<keyword id="KW-0963">Cytoplasm</keyword>
<keyword id="KW-1210">Necrosis</keyword>
<keyword id="KW-0597">Phosphoprotein</keyword>
<keyword id="KW-0611">Plant defense</keyword>
<keyword id="KW-1185">Reference proteome</keyword>
<keyword id="KW-0678">Repressor</keyword>
<keyword id="KW-0810">Translation regulation</keyword>
<organism>
    <name type="scientific">Arabidopsis thaliana</name>
    <name type="common">Mouse-ear cress</name>
    <dbReference type="NCBI Taxonomy" id="3702"/>
    <lineage>
        <taxon>Eukaryota</taxon>
        <taxon>Viridiplantae</taxon>
        <taxon>Streptophyta</taxon>
        <taxon>Embryophyta</taxon>
        <taxon>Tracheophyta</taxon>
        <taxon>Spermatophyta</taxon>
        <taxon>Magnoliopsida</taxon>
        <taxon>eudicotyledons</taxon>
        <taxon>Gunneridae</taxon>
        <taxon>Pentapetalae</taxon>
        <taxon>rosids</taxon>
        <taxon>malvids</taxon>
        <taxon>Brassicales</taxon>
        <taxon>Brassicaceae</taxon>
        <taxon>Camelineae</taxon>
        <taxon>Arabidopsis</taxon>
    </lineage>
</organism>
<evidence type="ECO:0000255" key="1">
    <source>
        <dbReference type="PROSITE-ProRule" id="PRU00101"/>
    </source>
</evidence>
<evidence type="ECO:0000256" key="2">
    <source>
        <dbReference type="SAM" id="MobiDB-lite"/>
    </source>
</evidence>
<evidence type="ECO:0000269" key="3">
    <source>
    </source>
</evidence>
<evidence type="ECO:0000269" key="4">
    <source>
    </source>
</evidence>
<evidence type="ECO:0000269" key="5">
    <source>
    </source>
</evidence>
<evidence type="ECO:0000303" key="6">
    <source>
    </source>
</evidence>
<evidence type="ECO:0000303" key="7">
    <source>
    </source>
</evidence>
<evidence type="ECO:0000303" key="8">
    <source>
    </source>
</evidence>
<evidence type="ECO:0000312" key="9">
    <source>
        <dbReference type="Araport" id="AT5G42950"/>
    </source>
</evidence>
<evidence type="ECO:0000312" key="10">
    <source>
        <dbReference type="EMBL" id="BAB09197.1"/>
    </source>
</evidence>
<proteinExistence type="evidence at protein level"/>
<dbReference type="EMBL" id="LC130495">
    <property type="protein sequence ID" value="BAX09292.1"/>
    <property type="molecule type" value="mRNA"/>
</dbReference>
<dbReference type="EMBL" id="AB008264">
    <property type="protein sequence ID" value="BAB09197.1"/>
    <property type="molecule type" value="Genomic_DNA"/>
</dbReference>
<dbReference type="EMBL" id="CP002688">
    <property type="protein sequence ID" value="AED94891.1"/>
    <property type="molecule type" value="Genomic_DNA"/>
</dbReference>
<dbReference type="RefSeq" id="NP_199109.1">
    <property type="nucleotide sequence ID" value="NM_123660.3"/>
</dbReference>
<dbReference type="SMR" id="Q9FMM3"/>
<dbReference type="FunCoup" id="Q9FMM3">
    <property type="interactions" value="2621"/>
</dbReference>
<dbReference type="IntAct" id="Q9FMM3">
    <property type="interactions" value="5"/>
</dbReference>
<dbReference type="STRING" id="3702.Q9FMM3"/>
<dbReference type="GlyGen" id="Q9FMM3">
    <property type="glycosylation" value="11 sites, 1 O-linked glycan (10 sites)"/>
</dbReference>
<dbReference type="iPTMnet" id="Q9FMM3"/>
<dbReference type="MetOSite" id="Q9FMM3"/>
<dbReference type="PaxDb" id="3702-AT5G42950.1"/>
<dbReference type="ProMEX" id="Q9FMM3"/>
<dbReference type="ProteomicsDB" id="177756"/>
<dbReference type="EnsemblPlants" id="AT5G42950.1">
    <property type="protein sequence ID" value="AT5G42950.1"/>
    <property type="gene ID" value="AT5G42950"/>
</dbReference>
<dbReference type="GeneID" id="834307"/>
<dbReference type="Gramene" id="AT5G42950.1">
    <property type="protein sequence ID" value="AT5G42950.1"/>
    <property type="gene ID" value="AT5G42950"/>
</dbReference>
<dbReference type="KEGG" id="ath:AT5G42950"/>
<dbReference type="Araport" id="AT5G42950"/>
<dbReference type="TAIR" id="AT5G42950">
    <property type="gene designation" value="EXA1"/>
</dbReference>
<dbReference type="eggNOG" id="KOG1862">
    <property type="taxonomic scope" value="Eukaryota"/>
</dbReference>
<dbReference type="HOGENOM" id="CLU_002948_0_0_1"/>
<dbReference type="InParanoid" id="Q9FMM3"/>
<dbReference type="OMA" id="DWNDPSA"/>
<dbReference type="PhylomeDB" id="Q9FMM3"/>
<dbReference type="CD-CODE" id="4299E36E">
    <property type="entry name" value="Nucleolus"/>
</dbReference>
<dbReference type="PRO" id="PR:Q9FMM3"/>
<dbReference type="Proteomes" id="UP000006548">
    <property type="component" value="Chromosome 5"/>
</dbReference>
<dbReference type="ExpressionAtlas" id="Q9FMM3">
    <property type="expression patterns" value="baseline and differential"/>
</dbReference>
<dbReference type="GO" id="GO:0005829">
    <property type="term" value="C:cytosol"/>
    <property type="evidence" value="ECO:0000314"/>
    <property type="project" value="UniProtKB"/>
</dbReference>
<dbReference type="GO" id="GO:0000932">
    <property type="term" value="C:P-body"/>
    <property type="evidence" value="ECO:0000314"/>
    <property type="project" value="UniProtKB"/>
</dbReference>
<dbReference type="GO" id="GO:0009536">
    <property type="term" value="C:plastid"/>
    <property type="evidence" value="ECO:0007005"/>
    <property type="project" value="TAIR"/>
</dbReference>
<dbReference type="GO" id="GO:0003729">
    <property type="term" value="F:mRNA binding"/>
    <property type="evidence" value="ECO:0000314"/>
    <property type="project" value="TAIR"/>
</dbReference>
<dbReference type="GO" id="GO:0030371">
    <property type="term" value="F:translation repressor activity"/>
    <property type="evidence" value="ECO:0000315"/>
    <property type="project" value="UniProtKB"/>
</dbReference>
<dbReference type="GO" id="GO:0042742">
    <property type="term" value="P:defense response to bacterium"/>
    <property type="evidence" value="ECO:0000315"/>
    <property type="project" value="UniProtKB"/>
</dbReference>
<dbReference type="GO" id="GO:0050832">
    <property type="term" value="P:defense response to fungus"/>
    <property type="evidence" value="ECO:0000315"/>
    <property type="project" value="UniProtKB"/>
</dbReference>
<dbReference type="GO" id="GO:0002229">
    <property type="term" value="P:defense response to oomycetes"/>
    <property type="evidence" value="ECO:0000315"/>
    <property type="project" value="UniProtKB"/>
</dbReference>
<dbReference type="GO" id="GO:0051607">
    <property type="term" value="P:defense response to virus"/>
    <property type="evidence" value="ECO:0000315"/>
    <property type="project" value="TAIR"/>
</dbReference>
<dbReference type="GO" id="GO:0012501">
    <property type="term" value="P:programmed cell death"/>
    <property type="evidence" value="ECO:0007669"/>
    <property type="project" value="UniProtKB-KW"/>
</dbReference>
<dbReference type="GO" id="GO:0031347">
    <property type="term" value="P:regulation of defense response"/>
    <property type="evidence" value="ECO:0000315"/>
    <property type="project" value="UniProtKB"/>
</dbReference>
<dbReference type="GO" id="GO:0002237">
    <property type="term" value="P:response to molecule of bacterial origin"/>
    <property type="evidence" value="ECO:0000314"/>
    <property type="project" value="UniProtKB"/>
</dbReference>
<dbReference type="CDD" id="cd00072">
    <property type="entry name" value="GYF"/>
    <property type="match status" value="1"/>
</dbReference>
<dbReference type="FunFam" id="3.30.1490.40:FF:000007">
    <property type="entry name" value="GYF domain-containing protein"/>
    <property type="match status" value="1"/>
</dbReference>
<dbReference type="Gene3D" id="3.30.1490.40">
    <property type="match status" value="1"/>
</dbReference>
<dbReference type="InterPro" id="IPR003169">
    <property type="entry name" value="GYF"/>
</dbReference>
<dbReference type="InterPro" id="IPR035445">
    <property type="entry name" value="GYF-like_dom_sf"/>
</dbReference>
<dbReference type="PANTHER" id="PTHR47471">
    <property type="entry name" value="GYF DOMAIN-CONTAINING PROTEIN"/>
    <property type="match status" value="1"/>
</dbReference>
<dbReference type="PANTHER" id="PTHR47471:SF1">
    <property type="entry name" value="PROTEIN ESSENTIAL FOR POTEXVIRUS ACCUMULATION 1"/>
    <property type="match status" value="1"/>
</dbReference>
<dbReference type="Pfam" id="PF02213">
    <property type="entry name" value="GYF"/>
    <property type="match status" value="1"/>
</dbReference>
<dbReference type="SMART" id="SM00444">
    <property type="entry name" value="GYF"/>
    <property type="match status" value="1"/>
</dbReference>
<dbReference type="SUPFAM" id="SSF55277">
    <property type="entry name" value="GYF domain"/>
    <property type="match status" value="1"/>
</dbReference>
<dbReference type="PROSITE" id="PS50829">
    <property type="entry name" value="GYF"/>
    <property type="match status" value="1"/>
</dbReference>
<reference key="1">
    <citation type="journal article" date="2016" name="Plant J.">
        <title>EXA1, a GYF domain protein, is responsible for loss-of-susceptibility to plantago asiatica mosaic virus in Arabidopsis thaliana.</title>
        <authorList>
            <person name="Hashimoto M."/>
            <person name="Neriya Y."/>
            <person name="Keima T."/>
            <person name="Iwabuchi N."/>
            <person name="Koinuma H."/>
            <person name="Hagiwara-Komoda Y."/>
            <person name="Ishikawa K."/>
            <person name="Himeno M."/>
            <person name="Maejima K."/>
            <person name="Yamaji Y."/>
            <person name="Namba S."/>
        </authorList>
    </citation>
    <scope>NUCLEOTIDE SEQUENCE [MRNA]</scope>
    <scope>FUNCTION</scope>
    <scope>DISRUPTION PHENOTYPE</scope>
    <scope>TISSUE SPECIFICITY</scope>
    <source>
        <strain>cv. Columbia</strain>
        <strain>cv. Landsberg erecta</strain>
    </source>
</reference>
<reference key="2">
    <citation type="journal article" date="1997" name="DNA Res.">
        <title>Structural analysis of Arabidopsis thaliana chromosome 5. III. Sequence features of the regions of 1,191,918 bp covered by seventeen physically assigned P1 clones.</title>
        <authorList>
            <person name="Nakamura Y."/>
            <person name="Sato S."/>
            <person name="Kaneko T."/>
            <person name="Kotani H."/>
            <person name="Asamizu E."/>
            <person name="Miyajima N."/>
            <person name="Tabata S."/>
        </authorList>
    </citation>
    <scope>NUCLEOTIDE SEQUENCE [LARGE SCALE GENOMIC DNA]</scope>
    <source>
        <strain>cv. Columbia</strain>
    </source>
</reference>
<reference key="3">
    <citation type="journal article" date="2017" name="Plant J.">
        <title>Araport11: a complete reannotation of the Arabidopsis thaliana reference genome.</title>
        <authorList>
            <person name="Cheng C.Y."/>
            <person name="Krishnakumar V."/>
            <person name="Chan A.P."/>
            <person name="Thibaud-Nissen F."/>
            <person name="Schobel S."/>
            <person name="Town C.D."/>
        </authorList>
    </citation>
    <scope>GENOME REANNOTATION</scope>
    <source>
        <strain>cv. Columbia</strain>
    </source>
</reference>
<reference key="4">
    <citation type="journal article" date="2009" name="J. Proteomics">
        <title>Phosphoproteomic analysis of nuclei-enriched fractions from Arabidopsis thaliana.</title>
        <authorList>
            <person name="Jones A.M.E."/>
            <person name="MacLean D."/>
            <person name="Studholme D.J."/>
            <person name="Serna-Sanz A."/>
            <person name="Andreasson E."/>
            <person name="Rathjen J.P."/>
            <person name="Peck S.C."/>
        </authorList>
    </citation>
    <scope>IDENTIFICATION BY MASS SPECTROMETRY [LARGE SCALE ANALYSIS]</scope>
</reference>
<reference key="5">
    <citation type="journal article" date="2009" name="Plant Physiol.">
        <title>Large-scale Arabidopsis phosphoproteome profiling reveals novel chloroplast kinase substrates and phosphorylation networks.</title>
        <authorList>
            <person name="Reiland S."/>
            <person name="Messerli G."/>
            <person name="Baerenfaller K."/>
            <person name="Gerrits B."/>
            <person name="Endler A."/>
            <person name="Grossmann J."/>
            <person name="Gruissem W."/>
            <person name="Baginsky S."/>
        </authorList>
    </citation>
    <scope>IDENTIFICATION BY MASS SPECTROMETRY [LARGE SCALE ANALYSIS]</scope>
</reference>
<reference key="6">
    <citation type="journal article" date="2017" name="Elife">
        <title>Regulation of plant immune receptor accumulation through translational repression by a glycine-tyrosine-phenylalanine (GYF) domain protein.</title>
        <authorList>
            <person name="Wu Z."/>
            <person name="Huang S."/>
            <person name="Zhang X."/>
            <person name="Wu D."/>
            <person name="Xia S."/>
            <person name="Li X."/>
        </authorList>
    </citation>
    <scope>FUNCTION</scope>
    <scope>DISRUPTION PHENOTYPE</scope>
    <scope>SUBUNIT</scope>
    <scope>INTERACTION WITH RPL18B AND EIF4E1</scope>
    <scope>SUBCELLULAR LOCATION</scope>
    <source>
        <strain>cv. Columbia</strain>
    </source>
</reference>
<reference key="7">
    <citation type="journal article" date="2017" name="PLoS Genet.">
        <title>The GYF domain protein PSIG1 dampens the induction of cell death during plant-pathogen interactions.</title>
        <authorList>
            <person name="Matsui H."/>
            <person name="Nomura Y."/>
            <person name="Egusa M."/>
            <person name="Hamada T."/>
            <person name="Hyon G.-S."/>
            <person name="Kaminaka H."/>
            <person name="Watanabe Y."/>
            <person name="Ueda T."/>
            <person name="Trujillo M."/>
            <person name="Shirasu K."/>
            <person name="Nakagami H."/>
        </authorList>
    </citation>
    <scope>FUNCTION</scope>
    <scope>DISRUPTION PHENOTYPE</scope>
    <scope>MUTAGENESIS OF TYR-575</scope>
    <scope>INTERACTION WITH SMG7</scope>
    <scope>PHOSPHORYLATION AT SER-39</scope>
    <scope>SUBCELLULAR LOCATION</scope>
    <source>
        <strain>cv. Col-8</strain>
        <strain>cv. Columbia</strain>
    </source>
</reference>